<evidence type="ECO:0000250" key="1">
    <source>
        <dbReference type="UniProtKB" id="P28737"/>
    </source>
</evidence>
<evidence type="ECO:0000250" key="2">
    <source>
        <dbReference type="UniProtKB" id="Q8NBU5"/>
    </source>
</evidence>
<evidence type="ECO:0000250" key="3">
    <source>
        <dbReference type="UniProtKB" id="Q9D5T0"/>
    </source>
</evidence>
<evidence type="ECO:0000255" key="4"/>
<evidence type="ECO:0000303" key="5">
    <source>
    </source>
</evidence>
<evidence type="ECO:0000303" key="6">
    <source ref="1"/>
</evidence>
<evidence type="ECO:0000305" key="7"/>
<name>ATD1B_DANRE</name>
<keyword id="KW-0067">ATP-binding</keyword>
<keyword id="KW-1003">Cell membrane</keyword>
<keyword id="KW-0472">Membrane</keyword>
<keyword id="KW-0496">Mitochondrion</keyword>
<keyword id="KW-1000">Mitochondrion outer membrane</keyword>
<keyword id="KW-0547">Nucleotide-binding</keyword>
<keyword id="KW-0576">Peroxisome</keyword>
<keyword id="KW-0628">Postsynaptic cell membrane</keyword>
<keyword id="KW-1185">Reference proteome</keyword>
<keyword id="KW-0770">Synapse</keyword>
<keyword id="KW-1278">Translocase</keyword>
<keyword id="KW-0812">Transmembrane</keyword>
<keyword id="KW-1133">Transmembrane helix</keyword>
<reference key="1">
    <citation type="submission" date="2005-05" db="EMBL/GenBank/DDBJ databases">
        <authorList>
            <consortium name="NIH - Zebrafish Gene Collection (ZGC) project"/>
        </authorList>
    </citation>
    <scope>NUCLEOTIDE SEQUENCE [LARGE SCALE MRNA]</scope>
    <source>
        <tissue>Eye</tissue>
    </source>
</reference>
<reference key="2">
    <citation type="journal article" date="2013" name="Nature">
        <title>The zebrafish reference genome sequence and its relationship to the human genome.</title>
        <authorList>
            <person name="Howe K."/>
            <person name="Clark M.D."/>
            <person name="Torroja C.F."/>
            <person name="Torrance J."/>
            <person name="Berthelot C."/>
            <person name="Muffato M."/>
            <person name="Collins J.E."/>
            <person name="Humphray S."/>
            <person name="McLaren K."/>
            <person name="Matthews L."/>
            <person name="McLaren S."/>
            <person name="Sealy I."/>
            <person name="Caccamo M."/>
            <person name="Churcher C."/>
            <person name="Scott C."/>
            <person name="Barrett J.C."/>
            <person name="Koch R."/>
            <person name="Rauch G.J."/>
            <person name="White S."/>
            <person name="Chow W."/>
            <person name="Kilian B."/>
            <person name="Quintais L.T."/>
            <person name="Guerra-Assuncao J.A."/>
            <person name="Zhou Y."/>
            <person name="Gu Y."/>
            <person name="Yen J."/>
            <person name="Vogel J.H."/>
            <person name="Eyre T."/>
            <person name="Redmond S."/>
            <person name="Banerjee R."/>
            <person name="Chi J."/>
            <person name="Fu B."/>
            <person name="Langley E."/>
            <person name="Maguire S.F."/>
            <person name="Laird G.K."/>
            <person name="Lloyd D."/>
            <person name="Kenyon E."/>
            <person name="Donaldson S."/>
            <person name="Sehra H."/>
            <person name="Almeida-King J."/>
            <person name="Loveland J."/>
            <person name="Trevanion S."/>
            <person name="Jones M."/>
            <person name="Quail M."/>
            <person name="Willey D."/>
            <person name="Hunt A."/>
            <person name="Burton J."/>
            <person name="Sims S."/>
            <person name="McLay K."/>
            <person name="Plumb B."/>
            <person name="Davis J."/>
            <person name="Clee C."/>
            <person name="Oliver K."/>
            <person name="Clark R."/>
            <person name="Riddle C."/>
            <person name="Elliot D."/>
            <person name="Threadgold G."/>
            <person name="Harden G."/>
            <person name="Ware D."/>
            <person name="Begum S."/>
            <person name="Mortimore B."/>
            <person name="Kerry G."/>
            <person name="Heath P."/>
            <person name="Phillimore B."/>
            <person name="Tracey A."/>
            <person name="Corby N."/>
            <person name="Dunn M."/>
            <person name="Johnson C."/>
            <person name="Wood J."/>
            <person name="Clark S."/>
            <person name="Pelan S."/>
            <person name="Griffiths G."/>
            <person name="Smith M."/>
            <person name="Glithero R."/>
            <person name="Howden P."/>
            <person name="Barker N."/>
            <person name="Lloyd C."/>
            <person name="Stevens C."/>
            <person name="Harley J."/>
            <person name="Holt K."/>
            <person name="Panagiotidis G."/>
            <person name="Lovell J."/>
            <person name="Beasley H."/>
            <person name="Henderson C."/>
            <person name="Gordon D."/>
            <person name="Auger K."/>
            <person name="Wright D."/>
            <person name="Collins J."/>
            <person name="Raisen C."/>
            <person name="Dyer L."/>
            <person name="Leung K."/>
            <person name="Robertson L."/>
            <person name="Ambridge K."/>
            <person name="Leongamornlert D."/>
            <person name="McGuire S."/>
            <person name="Gilderthorp R."/>
            <person name="Griffiths C."/>
            <person name="Manthravadi D."/>
            <person name="Nichol S."/>
            <person name="Barker G."/>
            <person name="Whitehead S."/>
            <person name="Kay M."/>
            <person name="Brown J."/>
            <person name="Murnane C."/>
            <person name="Gray E."/>
            <person name="Humphries M."/>
            <person name="Sycamore N."/>
            <person name="Barker D."/>
            <person name="Saunders D."/>
            <person name="Wallis J."/>
            <person name="Babbage A."/>
            <person name="Hammond S."/>
            <person name="Mashreghi-Mohammadi M."/>
            <person name="Barr L."/>
            <person name="Martin S."/>
            <person name="Wray P."/>
            <person name="Ellington A."/>
            <person name="Matthews N."/>
            <person name="Ellwood M."/>
            <person name="Woodmansey R."/>
            <person name="Clark G."/>
            <person name="Cooper J."/>
            <person name="Tromans A."/>
            <person name="Grafham D."/>
            <person name="Skuce C."/>
            <person name="Pandian R."/>
            <person name="Andrews R."/>
            <person name="Harrison E."/>
            <person name="Kimberley A."/>
            <person name="Garnett J."/>
            <person name="Fosker N."/>
            <person name="Hall R."/>
            <person name="Garner P."/>
            <person name="Kelly D."/>
            <person name="Bird C."/>
            <person name="Palmer S."/>
            <person name="Gehring I."/>
            <person name="Berger A."/>
            <person name="Dooley C.M."/>
            <person name="Ersan-Urun Z."/>
            <person name="Eser C."/>
            <person name="Geiger H."/>
            <person name="Geisler M."/>
            <person name="Karotki L."/>
            <person name="Kirn A."/>
            <person name="Konantz J."/>
            <person name="Konantz M."/>
            <person name="Oberlander M."/>
            <person name="Rudolph-Geiger S."/>
            <person name="Teucke M."/>
            <person name="Lanz C."/>
            <person name="Raddatz G."/>
            <person name="Osoegawa K."/>
            <person name="Zhu B."/>
            <person name="Rapp A."/>
            <person name="Widaa S."/>
            <person name="Langford C."/>
            <person name="Yang F."/>
            <person name="Schuster S.C."/>
            <person name="Carter N.P."/>
            <person name="Harrow J."/>
            <person name="Ning Z."/>
            <person name="Herrero J."/>
            <person name="Searle S.M."/>
            <person name="Enright A."/>
            <person name="Geisler R."/>
            <person name="Plasterk R.H."/>
            <person name="Lee C."/>
            <person name="Westerfield M."/>
            <person name="de Jong P.J."/>
            <person name="Zon L.I."/>
            <person name="Postlethwait J.H."/>
            <person name="Nusslein-Volhard C."/>
            <person name="Hubbard T.J."/>
            <person name="Roest Crollius H."/>
            <person name="Rogers J."/>
            <person name="Stemple D.L."/>
        </authorList>
    </citation>
    <scope>NUCLEOTIDE SEQUENCE [LARGE SCALE GENOMIC DNA] OF 1-281</scope>
    <source>
        <strain>Tuebingen</strain>
    </source>
</reference>
<gene>
    <name evidence="2" type="primary">atad1b</name>
    <name evidence="6" type="ORF">si:bz1g13.1</name>
    <name evidence="5" type="ORF">zgc:110042</name>
</gene>
<sequence length="362" mass="41094">MVLKEIPTENITRPLGRNEVIGLLFRLTIFGAVTYFTIKWMVDAIDPTRKQKVEAQKQAEKLMRQIGVQNVKLSEYEMSIAAHLVDPLTMQITWHDIAGLDEVITELKDTVILPIQKRHLFEGSRLLQPPKGVLLYGPPGCGKTLIAKATAKEAGFRFINLQPSTLTDKWYGESQKLAAAVFSLAIKLQPSIIFIDEIDSFLRNRSSSDHEATAMMKAQFMSLWDGLDTDYNCQVIIMGATNRPQDLDSAILRRMPTRFHINQPNVRQRKDILKLILENENVESAVELSEIAKQTDGFSGSDLREMCRDAALLCVRDFVHQESPEEDFIRPIRQEDLQRAIEKMKKSKSAGVHEAFMQVPLD</sequence>
<organism>
    <name type="scientific">Danio rerio</name>
    <name type="common">Zebrafish</name>
    <name type="synonym">Brachydanio rerio</name>
    <dbReference type="NCBI Taxonomy" id="7955"/>
    <lineage>
        <taxon>Eukaryota</taxon>
        <taxon>Metazoa</taxon>
        <taxon>Chordata</taxon>
        <taxon>Craniata</taxon>
        <taxon>Vertebrata</taxon>
        <taxon>Euteleostomi</taxon>
        <taxon>Actinopterygii</taxon>
        <taxon>Neopterygii</taxon>
        <taxon>Teleostei</taxon>
        <taxon>Ostariophysi</taxon>
        <taxon>Cypriniformes</taxon>
        <taxon>Danionidae</taxon>
        <taxon>Danioninae</taxon>
        <taxon>Danio</taxon>
    </lineage>
</organism>
<dbReference type="EC" id="7.4.2.-" evidence="1 2"/>
<dbReference type="EMBL" id="BC095151">
    <property type="protein sequence ID" value="AAH95151.1"/>
    <property type="molecule type" value="mRNA"/>
</dbReference>
<dbReference type="EMBL" id="AL731788">
    <property type="protein sequence ID" value="CAI11460.1"/>
    <property type="molecule type" value="Genomic_DNA"/>
</dbReference>
<dbReference type="RefSeq" id="NP_001019592.1">
    <property type="nucleotide sequence ID" value="NM_001024421.2"/>
</dbReference>
<dbReference type="RefSeq" id="XP_017213925.1">
    <property type="nucleotide sequence ID" value="XM_017358436.1"/>
</dbReference>
<dbReference type="SMR" id="Q503W7"/>
<dbReference type="FunCoup" id="Q503W7">
    <property type="interactions" value="1499"/>
</dbReference>
<dbReference type="STRING" id="7955.ENSDARP00000073585"/>
<dbReference type="PaxDb" id="7955-ENSDARP00000073585"/>
<dbReference type="Ensembl" id="ENSDART00000079130">
    <property type="protein sequence ID" value="ENSDARP00000073585"/>
    <property type="gene ID" value="ENSDARG00000056609"/>
</dbReference>
<dbReference type="Ensembl" id="ENSDART00000189257">
    <property type="protein sequence ID" value="ENSDARP00000156137"/>
    <property type="gene ID" value="ENSDARG00000056609"/>
</dbReference>
<dbReference type="GeneID" id="368412"/>
<dbReference type="KEGG" id="dre:368412"/>
<dbReference type="AGR" id="ZFIN:ZDB-GENE-030616-44"/>
<dbReference type="CTD" id="368412"/>
<dbReference type="ZFIN" id="ZDB-GENE-030616-44">
    <property type="gene designation" value="atad1b"/>
</dbReference>
<dbReference type="eggNOG" id="KOG0737">
    <property type="taxonomic scope" value="Eukaryota"/>
</dbReference>
<dbReference type="HOGENOM" id="CLU_000688_21_14_1"/>
<dbReference type="InParanoid" id="Q503W7"/>
<dbReference type="OMA" id="CRNAAMR"/>
<dbReference type="OrthoDB" id="10254455at2759"/>
<dbReference type="PhylomeDB" id="Q503W7"/>
<dbReference type="TreeFam" id="TF105016"/>
<dbReference type="Reactome" id="R-DRE-9603798">
    <property type="pathway name" value="Class I peroxisomal membrane protein import"/>
</dbReference>
<dbReference type="PRO" id="PR:Q503W7"/>
<dbReference type="Proteomes" id="UP000000437">
    <property type="component" value="Chromosome 12"/>
</dbReference>
<dbReference type="Bgee" id="ENSDARG00000056609">
    <property type="expression patterns" value="Expressed in testis and 22 other cell types or tissues"/>
</dbReference>
<dbReference type="GO" id="GO:0005741">
    <property type="term" value="C:mitochondrial outer membrane"/>
    <property type="evidence" value="ECO:0000250"/>
    <property type="project" value="UniProtKB"/>
</dbReference>
<dbReference type="GO" id="GO:0005778">
    <property type="term" value="C:peroxisomal membrane"/>
    <property type="evidence" value="ECO:0000250"/>
    <property type="project" value="UniProtKB"/>
</dbReference>
<dbReference type="GO" id="GO:0045211">
    <property type="term" value="C:postsynaptic membrane"/>
    <property type="evidence" value="ECO:0007669"/>
    <property type="project" value="UniProtKB-SubCell"/>
</dbReference>
<dbReference type="GO" id="GO:0005524">
    <property type="term" value="F:ATP binding"/>
    <property type="evidence" value="ECO:0007669"/>
    <property type="project" value="UniProtKB-KW"/>
</dbReference>
<dbReference type="GO" id="GO:0016887">
    <property type="term" value="F:ATP hydrolysis activity"/>
    <property type="evidence" value="ECO:0007669"/>
    <property type="project" value="InterPro"/>
</dbReference>
<dbReference type="GO" id="GO:0140567">
    <property type="term" value="F:membrane protein dislocase activity"/>
    <property type="evidence" value="ECO:0007669"/>
    <property type="project" value="RHEA"/>
</dbReference>
<dbReference type="GO" id="GO:0009653">
    <property type="term" value="P:anatomical structure morphogenesis"/>
    <property type="evidence" value="ECO:0007669"/>
    <property type="project" value="UniProtKB-ARBA"/>
</dbReference>
<dbReference type="GO" id="GO:0140570">
    <property type="term" value="P:extraction of mislocalized protein from mitochondrial outer membrane"/>
    <property type="evidence" value="ECO:0000250"/>
    <property type="project" value="UniProtKB"/>
</dbReference>
<dbReference type="CDD" id="cd19520">
    <property type="entry name" value="RecA-like_ATAD1"/>
    <property type="match status" value="1"/>
</dbReference>
<dbReference type="FunFam" id="3.40.50.300:FF:000538">
    <property type="entry name" value="ATPase family AAA domain-containing protein 1"/>
    <property type="match status" value="1"/>
</dbReference>
<dbReference type="Gene3D" id="1.10.8.60">
    <property type="match status" value="1"/>
</dbReference>
<dbReference type="Gene3D" id="3.40.50.300">
    <property type="entry name" value="P-loop containing nucleotide triphosphate hydrolases"/>
    <property type="match status" value="1"/>
</dbReference>
<dbReference type="InterPro" id="IPR003593">
    <property type="entry name" value="AAA+_ATPase"/>
</dbReference>
<dbReference type="InterPro" id="IPR041569">
    <property type="entry name" value="AAA_lid_3"/>
</dbReference>
<dbReference type="InterPro" id="IPR003959">
    <property type="entry name" value="ATPase_AAA_core"/>
</dbReference>
<dbReference type="InterPro" id="IPR003960">
    <property type="entry name" value="ATPase_AAA_CS"/>
</dbReference>
<dbReference type="InterPro" id="IPR051701">
    <property type="entry name" value="Mito_OM_Translocase_MSP1"/>
</dbReference>
<dbReference type="InterPro" id="IPR027417">
    <property type="entry name" value="P-loop_NTPase"/>
</dbReference>
<dbReference type="PANTHER" id="PTHR45644">
    <property type="entry name" value="AAA ATPASE, PUTATIVE (AFU_ORTHOLOGUE AFUA_2G12920)-RELATED-RELATED"/>
    <property type="match status" value="1"/>
</dbReference>
<dbReference type="PANTHER" id="PTHR45644:SF2">
    <property type="entry name" value="OUTER MITOCHONDRIAL TRANSMEMBRANE HELIX TRANSLOCASE"/>
    <property type="match status" value="1"/>
</dbReference>
<dbReference type="Pfam" id="PF00004">
    <property type="entry name" value="AAA"/>
    <property type="match status" value="1"/>
</dbReference>
<dbReference type="Pfam" id="PF17862">
    <property type="entry name" value="AAA_lid_3"/>
    <property type="match status" value="1"/>
</dbReference>
<dbReference type="SMART" id="SM00382">
    <property type="entry name" value="AAA"/>
    <property type="match status" value="1"/>
</dbReference>
<dbReference type="SUPFAM" id="SSF52540">
    <property type="entry name" value="P-loop containing nucleoside triphosphate hydrolases"/>
    <property type="match status" value="1"/>
</dbReference>
<dbReference type="PROSITE" id="PS00674">
    <property type="entry name" value="AAA"/>
    <property type="match status" value="1"/>
</dbReference>
<feature type="chain" id="PRO_0000084795" description="Outer mitochondrial transmembrane helix translocase">
    <location>
        <begin position="1"/>
        <end position="362"/>
    </location>
</feature>
<feature type="topological domain" description="Mitochondrial intermembrane" evidence="7">
    <location>
        <begin position="1"/>
        <end position="19"/>
    </location>
</feature>
<feature type="transmembrane region" description="Helical" evidence="4">
    <location>
        <begin position="20"/>
        <end position="42"/>
    </location>
</feature>
<feature type="topological domain" description="Cytoplasmic" evidence="7">
    <location>
        <begin position="43"/>
        <end position="362"/>
    </location>
</feature>
<feature type="binding site" evidence="4">
    <location>
        <begin position="137"/>
        <end position="144"/>
    </location>
    <ligand>
        <name>ATP</name>
        <dbReference type="ChEBI" id="CHEBI:30616"/>
    </ligand>
</feature>
<feature type="sequence conflict" description="In Ref. 2; AAH95151." evidence="7" ref="2">
    <original>H</original>
    <variation>Y</variation>
    <location>
        <position position="95"/>
    </location>
</feature>
<feature type="sequence conflict" description="In Ref. 2; AAH95151." evidence="7" ref="2">
    <original>V</original>
    <variation>A</variation>
    <location>
        <position position="266"/>
    </location>
</feature>
<comment type="function">
    <text evidence="1 2 3">Outer mitochondrial translocase required to remove mislocalized tail-anchored transmembrane proteins on mitochondria (By similarity). Specifically recognizes and binds tail-anchored transmembrane proteins: acts as a dislocase that mediates the ATP-dependent extraction of mistargeted tail-anchored transmembrane proteins from the mitochondrion outer membrane (By similarity). Also plays a critical role in regulating the surface expression of AMPA receptors (AMPAR), thereby regulating synaptic plasticity and learning and memory (By similarity).</text>
</comment>
<comment type="catalytic activity">
    <reaction evidence="1 2">
        <text>[protein]-with a C-terminal TM segment(out) + ATP + H2O = [protein]-with a C-terminal TM segment(in) + ADP + phosphate + H(+)</text>
        <dbReference type="Rhea" id="RHEA:66168"/>
        <dbReference type="Rhea" id="RHEA-COMP:16963"/>
        <dbReference type="ChEBI" id="CHEBI:15377"/>
        <dbReference type="ChEBI" id="CHEBI:15378"/>
        <dbReference type="ChEBI" id="CHEBI:30616"/>
        <dbReference type="ChEBI" id="CHEBI:43474"/>
        <dbReference type="ChEBI" id="CHEBI:90782"/>
        <dbReference type="ChEBI" id="CHEBI:456216"/>
    </reaction>
</comment>
<comment type="subcellular location">
    <subcellularLocation>
        <location evidence="2">Mitochondrion outer membrane</location>
        <topology evidence="4">Single-pass membrane protein</topology>
    </subcellularLocation>
    <subcellularLocation>
        <location evidence="2">Peroxisome membrane</location>
        <topology evidence="4">Single-pass membrane protein</topology>
    </subcellularLocation>
    <subcellularLocation>
        <location evidence="3">Postsynaptic cell membrane</location>
        <topology evidence="4">Single-pass membrane protein</topology>
    </subcellularLocation>
</comment>
<comment type="similarity">
    <text evidence="7">Belongs to the AAA ATPase family. MSP1 subfamily.</text>
</comment>
<protein>
    <recommendedName>
        <fullName evidence="7">Outer mitochondrial transmembrane helix translocase</fullName>
        <ecNumber evidence="1 2">7.4.2.-</ecNumber>
    </recommendedName>
    <alternativeName>
        <fullName evidence="7">ATPase family AAA domain-containing protein 1-B</fullName>
    </alternativeName>
</protein>
<proteinExistence type="evidence at transcript level"/>
<accession>Q503W7</accession>
<accession>Q5SQM1</accession>